<evidence type="ECO:0000255" key="1">
    <source>
        <dbReference type="HAMAP-Rule" id="MF_00042"/>
    </source>
</evidence>
<evidence type="ECO:0000255" key="2">
    <source>
        <dbReference type="PROSITE-ProRule" id="PRU00408"/>
    </source>
</evidence>
<feature type="chain" id="PRO_0000195427" description="Ribonuclease HI">
    <location>
        <begin position="1"/>
        <end position="154"/>
    </location>
</feature>
<feature type="domain" description="RNase H type-1" evidence="2">
    <location>
        <begin position="1"/>
        <end position="142"/>
    </location>
</feature>
<feature type="binding site" evidence="1">
    <location>
        <position position="10"/>
    </location>
    <ligand>
        <name>Mg(2+)</name>
        <dbReference type="ChEBI" id="CHEBI:18420"/>
        <label>1</label>
    </ligand>
</feature>
<feature type="binding site" evidence="1">
    <location>
        <position position="10"/>
    </location>
    <ligand>
        <name>Mg(2+)</name>
        <dbReference type="ChEBI" id="CHEBI:18420"/>
        <label>2</label>
    </ligand>
</feature>
<feature type="binding site" evidence="1">
    <location>
        <position position="48"/>
    </location>
    <ligand>
        <name>Mg(2+)</name>
        <dbReference type="ChEBI" id="CHEBI:18420"/>
        <label>1</label>
    </ligand>
</feature>
<feature type="binding site" evidence="1">
    <location>
        <position position="70"/>
    </location>
    <ligand>
        <name>Mg(2+)</name>
        <dbReference type="ChEBI" id="CHEBI:18420"/>
        <label>1</label>
    </ligand>
</feature>
<feature type="binding site" evidence="1">
    <location>
        <position position="134"/>
    </location>
    <ligand>
        <name>Mg(2+)</name>
        <dbReference type="ChEBI" id="CHEBI:18420"/>
        <label>2</label>
    </ligand>
</feature>
<keyword id="KW-0963">Cytoplasm</keyword>
<keyword id="KW-0255">Endonuclease</keyword>
<keyword id="KW-0378">Hydrolase</keyword>
<keyword id="KW-0460">Magnesium</keyword>
<keyword id="KW-0479">Metal-binding</keyword>
<keyword id="KW-0540">Nuclease</keyword>
<keyword id="KW-1185">Reference proteome</keyword>
<accession>Q8ZH30</accession>
<accession>Q0WHW3</accession>
<name>RNH_YERPE</name>
<comment type="function">
    <text evidence="1">Endonuclease that specifically degrades the RNA of RNA-DNA hybrids.</text>
</comment>
<comment type="catalytic activity">
    <reaction evidence="1">
        <text>Endonucleolytic cleavage to 5'-phosphomonoester.</text>
        <dbReference type="EC" id="3.1.26.4"/>
    </reaction>
</comment>
<comment type="cofactor">
    <cofactor evidence="1">
        <name>Mg(2+)</name>
        <dbReference type="ChEBI" id="CHEBI:18420"/>
    </cofactor>
    <text evidence="1">Binds 1 Mg(2+) ion per subunit. May bind a second metal ion at a regulatory site, or after substrate binding.</text>
</comment>
<comment type="subunit">
    <text evidence="1">Monomer.</text>
</comment>
<comment type="subcellular location">
    <subcellularLocation>
        <location evidence="1">Cytoplasm</location>
    </subcellularLocation>
</comment>
<comment type="similarity">
    <text evidence="1">Belongs to the RNase H family.</text>
</comment>
<dbReference type="EC" id="3.1.26.4" evidence="1"/>
<dbReference type="EMBL" id="AL590842">
    <property type="protein sequence ID" value="CAL19747.1"/>
    <property type="molecule type" value="Genomic_DNA"/>
</dbReference>
<dbReference type="EMBL" id="AE009952">
    <property type="protein sequence ID" value="AAM86645.1"/>
    <property type="molecule type" value="Genomic_DNA"/>
</dbReference>
<dbReference type="EMBL" id="AE017042">
    <property type="protein sequence ID" value="AAS62952.1"/>
    <property type="molecule type" value="Genomic_DNA"/>
</dbReference>
<dbReference type="PIR" id="AI0132">
    <property type="entry name" value="AI0132"/>
</dbReference>
<dbReference type="RefSeq" id="WP_002210699.1">
    <property type="nucleotide sequence ID" value="NZ_WUCM01000115.1"/>
</dbReference>
<dbReference type="RefSeq" id="YP_002346125.1">
    <property type="nucleotide sequence ID" value="NC_003143.1"/>
</dbReference>
<dbReference type="SMR" id="Q8ZH30"/>
<dbReference type="IntAct" id="Q8ZH30">
    <property type="interactions" value="2"/>
</dbReference>
<dbReference type="STRING" id="214092.YPO1081"/>
<dbReference type="PaxDb" id="214092-YPO1081"/>
<dbReference type="DNASU" id="1148042"/>
<dbReference type="EnsemblBacteria" id="AAS62952">
    <property type="protein sequence ID" value="AAS62952"/>
    <property type="gene ID" value="YP_2768"/>
</dbReference>
<dbReference type="GeneID" id="57977475"/>
<dbReference type="KEGG" id="ype:YPO1081"/>
<dbReference type="KEGG" id="ypk:y3095"/>
<dbReference type="KEGG" id="ypm:YP_2768"/>
<dbReference type="PATRIC" id="fig|214092.21.peg.1372"/>
<dbReference type="eggNOG" id="COG0328">
    <property type="taxonomic scope" value="Bacteria"/>
</dbReference>
<dbReference type="HOGENOM" id="CLU_030894_6_0_6"/>
<dbReference type="OMA" id="MQEIEIF"/>
<dbReference type="OrthoDB" id="7845843at2"/>
<dbReference type="Proteomes" id="UP000000815">
    <property type="component" value="Chromosome"/>
</dbReference>
<dbReference type="Proteomes" id="UP000001019">
    <property type="component" value="Chromosome"/>
</dbReference>
<dbReference type="Proteomes" id="UP000002490">
    <property type="component" value="Chromosome"/>
</dbReference>
<dbReference type="GO" id="GO:0005737">
    <property type="term" value="C:cytoplasm"/>
    <property type="evidence" value="ECO:0007669"/>
    <property type="project" value="UniProtKB-SubCell"/>
</dbReference>
<dbReference type="GO" id="GO:0000287">
    <property type="term" value="F:magnesium ion binding"/>
    <property type="evidence" value="ECO:0007669"/>
    <property type="project" value="UniProtKB-UniRule"/>
</dbReference>
<dbReference type="GO" id="GO:0003676">
    <property type="term" value="F:nucleic acid binding"/>
    <property type="evidence" value="ECO:0007669"/>
    <property type="project" value="InterPro"/>
</dbReference>
<dbReference type="GO" id="GO:0004523">
    <property type="term" value="F:RNA-DNA hybrid ribonuclease activity"/>
    <property type="evidence" value="ECO:0000318"/>
    <property type="project" value="GO_Central"/>
</dbReference>
<dbReference type="GO" id="GO:0043137">
    <property type="term" value="P:DNA replication, removal of RNA primer"/>
    <property type="evidence" value="ECO:0000318"/>
    <property type="project" value="GO_Central"/>
</dbReference>
<dbReference type="CDD" id="cd09278">
    <property type="entry name" value="RNase_HI_prokaryote_like"/>
    <property type="match status" value="1"/>
</dbReference>
<dbReference type="FunFam" id="3.30.420.10:FF:000008">
    <property type="entry name" value="Ribonuclease H"/>
    <property type="match status" value="1"/>
</dbReference>
<dbReference type="Gene3D" id="3.30.420.10">
    <property type="entry name" value="Ribonuclease H-like superfamily/Ribonuclease H"/>
    <property type="match status" value="1"/>
</dbReference>
<dbReference type="HAMAP" id="MF_00042">
    <property type="entry name" value="RNase_H"/>
    <property type="match status" value="1"/>
</dbReference>
<dbReference type="InterPro" id="IPR050092">
    <property type="entry name" value="RNase_H"/>
</dbReference>
<dbReference type="InterPro" id="IPR012337">
    <property type="entry name" value="RNaseH-like_sf"/>
</dbReference>
<dbReference type="InterPro" id="IPR002156">
    <property type="entry name" value="RNaseH_domain"/>
</dbReference>
<dbReference type="InterPro" id="IPR036397">
    <property type="entry name" value="RNaseH_sf"/>
</dbReference>
<dbReference type="InterPro" id="IPR022892">
    <property type="entry name" value="RNaseHI"/>
</dbReference>
<dbReference type="NCBIfam" id="NF001236">
    <property type="entry name" value="PRK00203.1"/>
    <property type="match status" value="1"/>
</dbReference>
<dbReference type="PANTHER" id="PTHR10642">
    <property type="entry name" value="RIBONUCLEASE H1"/>
    <property type="match status" value="1"/>
</dbReference>
<dbReference type="PANTHER" id="PTHR10642:SF26">
    <property type="entry name" value="RIBONUCLEASE H1"/>
    <property type="match status" value="1"/>
</dbReference>
<dbReference type="Pfam" id="PF00075">
    <property type="entry name" value="RNase_H"/>
    <property type="match status" value="1"/>
</dbReference>
<dbReference type="SUPFAM" id="SSF53098">
    <property type="entry name" value="Ribonuclease H-like"/>
    <property type="match status" value="1"/>
</dbReference>
<dbReference type="PROSITE" id="PS50879">
    <property type="entry name" value="RNASE_H_1"/>
    <property type="match status" value="1"/>
</dbReference>
<organism>
    <name type="scientific">Yersinia pestis</name>
    <dbReference type="NCBI Taxonomy" id="632"/>
    <lineage>
        <taxon>Bacteria</taxon>
        <taxon>Pseudomonadati</taxon>
        <taxon>Pseudomonadota</taxon>
        <taxon>Gammaproteobacteria</taxon>
        <taxon>Enterobacterales</taxon>
        <taxon>Yersiniaceae</taxon>
        <taxon>Yersinia</taxon>
    </lineage>
</organism>
<reference key="1">
    <citation type="journal article" date="2001" name="Nature">
        <title>Genome sequence of Yersinia pestis, the causative agent of plague.</title>
        <authorList>
            <person name="Parkhill J."/>
            <person name="Wren B.W."/>
            <person name="Thomson N.R."/>
            <person name="Titball R.W."/>
            <person name="Holden M.T.G."/>
            <person name="Prentice M.B."/>
            <person name="Sebaihia M."/>
            <person name="James K.D."/>
            <person name="Churcher C.M."/>
            <person name="Mungall K.L."/>
            <person name="Baker S."/>
            <person name="Basham D."/>
            <person name="Bentley S.D."/>
            <person name="Brooks K."/>
            <person name="Cerdeno-Tarraga A.-M."/>
            <person name="Chillingworth T."/>
            <person name="Cronin A."/>
            <person name="Davies R.M."/>
            <person name="Davis P."/>
            <person name="Dougan G."/>
            <person name="Feltwell T."/>
            <person name="Hamlin N."/>
            <person name="Holroyd S."/>
            <person name="Jagels K."/>
            <person name="Karlyshev A.V."/>
            <person name="Leather S."/>
            <person name="Moule S."/>
            <person name="Oyston P.C.F."/>
            <person name="Quail M.A."/>
            <person name="Rutherford K.M."/>
            <person name="Simmonds M."/>
            <person name="Skelton J."/>
            <person name="Stevens K."/>
            <person name="Whitehead S."/>
            <person name="Barrell B.G."/>
        </authorList>
    </citation>
    <scope>NUCLEOTIDE SEQUENCE [LARGE SCALE GENOMIC DNA]</scope>
    <source>
        <strain>CO-92 / Biovar Orientalis</strain>
    </source>
</reference>
<reference key="2">
    <citation type="journal article" date="2002" name="J. Bacteriol.">
        <title>Genome sequence of Yersinia pestis KIM.</title>
        <authorList>
            <person name="Deng W."/>
            <person name="Burland V."/>
            <person name="Plunkett G. III"/>
            <person name="Boutin A."/>
            <person name="Mayhew G.F."/>
            <person name="Liss P."/>
            <person name="Perna N.T."/>
            <person name="Rose D.J."/>
            <person name="Mau B."/>
            <person name="Zhou S."/>
            <person name="Schwartz D.C."/>
            <person name="Fetherston J.D."/>
            <person name="Lindler L.E."/>
            <person name="Brubaker R.R."/>
            <person name="Plano G.V."/>
            <person name="Straley S.C."/>
            <person name="McDonough K.A."/>
            <person name="Nilles M.L."/>
            <person name="Matson J.S."/>
            <person name="Blattner F.R."/>
            <person name="Perry R.D."/>
        </authorList>
    </citation>
    <scope>NUCLEOTIDE SEQUENCE [LARGE SCALE GENOMIC DNA]</scope>
    <source>
        <strain>KIM10+ / Biovar Mediaevalis</strain>
    </source>
</reference>
<reference key="3">
    <citation type="journal article" date="2004" name="DNA Res.">
        <title>Complete genome sequence of Yersinia pestis strain 91001, an isolate avirulent to humans.</title>
        <authorList>
            <person name="Song Y."/>
            <person name="Tong Z."/>
            <person name="Wang J."/>
            <person name="Wang L."/>
            <person name="Guo Z."/>
            <person name="Han Y."/>
            <person name="Zhang J."/>
            <person name="Pei D."/>
            <person name="Zhou D."/>
            <person name="Qin H."/>
            <person name="Pang X."/>
            <person name="Han Y."/>
            <person name="Zhai J."/>
            <person name="Li M."/>
            <person name="Cui B."/>
            <person name="Qi Z."/>
            <person name="Jin L."/>
            <person name="Dai R."/>
            <person name="Chen F."/>
            <person name="Li S."/>
            <person name="Ye C."/>
            <person name="Du Z."/>
            <person name="Lin W."/>
            <person name="Wang J."/>
            <person name="Yu J."/>
            <person name="Yang H."/>
            <person name="Wang J."/>
            <person name="Huang P."/>
            <person name="Yang R."/>
        </authorList>
    </citation>
    <scope>NUCLEOTIDE SEQUENCE [LARGE SCALE GENOMIC DNA]</scope>
    <source>
        <strain>91001 / Biovar Mediaevalis</strain>
    </source>
</reference>
<protein>
    <recommendedName>
        <fullName evidence="1">Ribonuclease HI</fullName>
        <shortName evidence="1">RNase HI</shortName>
        <ecNumber evidence="1">3.1.26.4</ecNumber>
    </recommendedName>
</protein>
<sequence>MTKQVEIFTDGSCLGNPGPGGYGAILRYKQHEKTFSAGYYLTTNNRMELMAAIVALEALTSPCEVTLSTDSQYVRQGITQWIHNWKKRGWKTADRKPVRNVDLWQRLDLAIQSHTIQWEWVKGHAGHPENERCDELARQGANSPTLDDTGYNPD</sequence>
<gene>
    <name evidence="1" type="primary">rnhA</name>
    <name type="ordered locus">YPO1081</name>
    <name type="ordered locus">y3095</name>
    <name type="ordered locus">YP_2768</name>
</gene>
<proteinExistence type="inferred from homology"/>